<name>AROC_BAUCH</name>
<gene>
    <name evidence="1" type="primary">aroC</name>
    <name type="ordered locus">BCI_0361</name>
</gene>
<reference key="1">
    <citation type="journal article" date="2006" name="PLoS Biol.">
        <title>Metabolic complementarity and genomics of the dual bacterial symbiosis of sharpshooters.</title>
        <authorList>
            <person name="Wu D."/>
            <person name="Daugherty S.C."/>
            <person name="Van Aken S.E."/>
            <person name="Pai G.H."/>
            <person name="Watkins K.L."/>
            <person name="Khouri H."/>
            <person name="Tallon L.J."/>
            <person name="Zaborsky J.M."/>
            <person name="Dunbar H.E."/>
            <person name="Tran P.L."/>
            <person name="Moran N.A."/>
            <person name="Eisen J.A."/>
        </authorList>
    </citation>
    <scope>NUCLEOTIDE SEQUENCE [LARGE SCALE GENOMIC DNA]</scope>
</reference>
<comment type="function">
    <text evidence="1">Catalyzes the anti-1,4-elimination of the C-3 phosphate and the C-6 proR hydrogen from 5-enolpyruvylshikimate-3-phosphate (EPSP) to yield chorismate, which is the branch point compound that serves as the starting substrate for the three terminal pathways of aromatic amino acid biosynthesis. This reaction introduces a second double bond into the aromatic ring system.</text>
</comment>
<comment type="catalytic activity">
    <reaction evidence="1">
        <text>5-O-(1-carboxyvinyl)-3-phosphoshikimate = chorismate + phosphate</text>
        <dbReference type="Rhea" id="RHEA:21020"/>
        <dbReference type="ChEBI" id="CHEBI:29748"/>
        <dbReference type="ChEBI" id="CHEBI:43474"/>
        <dbReference type="ChEBI" id="CHEBI:57701"/>
        <dbReference type="EC" id="4.2.3.5"/>
    </reaction>
</comment>
<comment type="cofactor">
    <cofactor evidence="1">
        <name>FMNH2</name>
        <dbReference type="ChEBI" id="CHEBI:57618"/>
    </cofactor>
    <text evidence="1">Reduced FMN (FMNH(2)).</text>
</comment>
<comment type="pathway">
    <text evidence="1">Metabolic intermediate biosynthesis; chorismate biosynthesis; chorismate from D-erythrose 4-phosphate and phosphoenolpyruvate: step 7/7.</text>
</comment>
<comment type="subunit">
    <text evidence="1">Homotetramer.</text>
</comment>
<comment type="similarity">
    <text evidence="1">Belongs to the chorismate synthase family.</text>
</comment>
<dbReference type="EC" id="4.2.3.5" evidence="1"/>
<dbReference type="EMBL" id="CP000238">
    <property type="protein sequence ID" value="ABF14196.1"/>
    <property type="molecule type" value="Genomic_DNA"/>
</dbReference>
<dbReference type="RefSeq" id="WP_011520538.1">
    <property type="nucleotide sequence ID" value="NC_007984.1"/>
</dbReference>
<dbReference type="SMR" id="Q1LTA9"/>
<dbReference type="STRING" id="374463.BCI_0361"/>
<dbReference type="KEGG" id="bci:BCI_0361"/>
<dbReference type="HOGENOM" id="CLU_034547_0_2_6"/>
<dbReference type="OrthoDB" id="9771806at2"/>
<dbReference type="UniPathway" id="UPA00053">
    <property type="reaction ID" value="UER00090"/>
</dbReference>
<dbReference type="Proteomes" id="UP000002427">
    <property type="component" value="Chromosome"/>
</dbReference>
<dbReference type="GO" id="GO:0005829">
    <property type="term" value="C:cytosol"/>
    <property type="evidence" value="ECO:0007669"/>
    <property type="project" value="TreeGrafter"/>
</dbReference>
<dbReference type="GO" id="GO:0004107">
    <property type="term" value="F:chorismate synthase activity"/>
    <property type="evidence" value="ECO:0007669"/>
    <property type="project" value="UniProtKB-UniRule"/>
</dbReference>
<dbReference type="GO" id="GO:0010181">
    <property type="term" value="F:FMN binding"/>
    <property type="evidence" value="ECO:0007669"/>
    <property type="project" value="TreeGrafter"/>
</dbReference>
<dbReference type="GO" id="GO:0008652">
    <property type="term" value="P:amino acid biosynthetic process"/>
    <property type="evidence" value="ECO:0007669"/>
    <property type="project" value="UniProtKB-KW"/>
</dbReference>
<dbReference type="GO" id="GO:0009073">
    <property type="term" value="P:aromatic amino acid family biosynthetic process"/>
    <property type="evidence" value="ECO:0007669"/>
    <property type="project" value="UniProtKB-KW"/>
</dbReference>
<dbReference type="GO" id="GO:0009423">
    <property type="term" value="P:chorismate biosynthetic process"/>
    <property type="evidence" value="ECO:0007669"/>
    <property type="project" value="UniProtKB-UniRule"/>
</dbReference>
<dbReference type="CDD" id="cd07304">
    <property type="entry name" value="Chorismate_synthase"/>
    <property type="match status" value="1"/>
</dbReference>
<dbReference type="FunFam" id="3.60.150.10:FF:000001">
    <property type="entry name" value="Chorismate synthase"/>
    <property type="match status" value="1"/>
</dbReference>
<dbReference type="Gene3D" id="3.60.150.10">
    <property type="entry name" value="Chorismate synthase AroC"/>
    <property type="match status" value="1"/>
</dbReference>
<dbReference type="HAMAP" id="MF_00300">
    <property type="entry name" value="Chorismate_synth"/>
    <property type="match status" value="1"/>
</dbReference>
<dbReference type="InterPro" id="IPR000453">
    <property type="entry name" value="Chorismate_synth"/>
</dbReference>
<dbReference type="InterPro" id="IPR035904">
    <property type="entry name" value="Chorismate_synth_AroC_sf"/>
</dbReference>
<dbReference type="InterPro" id="IPR020541">
    <property type="entry name" value="Chorismate_synthase_CS"/>
</dbReference>
<dbReference type="NCBIfam" id="TIGR00033">
    <property type="entry name" value="aroC"/>
    <property type="match status" value="1"/>
</dbReference>
<dbReference type="NCBIfam" id="NF003793">
    <property type="entry name" value="PRK05382.1"/>
    <property type="match status" value="1"/>
</dbReference>
<dbReference type="PANTHER" id="PTHR21085">
    <property type="entry name" value="CHORISMATE SYNTHASE"/>
    <property type="match status" value="1"/>
</dbReference>
<dbReference type="PANTHER" id="PTHR21085:SF0">
    <property type="entry name" value="CHORISMATE SYNTHASE"/>
    <property type="match status" value="1"/>
</dbReference>
<dbReference type="Pfam" id="PF01264">
    <property type="entry name" value="Chorismate_synt"/>
    <property type="match status" value="1"/>
</dbReference>
<dbReference type="PIRSF" id="PIRSF001456">
    <property type="entry name" value="Chorismate_synth"/>
    <property type="match status" value="1"/>
</dbReference>
<dbReference type="SUPFAM" id="SSF103263">
    <property type="entry name" value="Chorismate synthase, AroC"/>
    <property type="match status" value="1"/>
</dbReference>
<dbReference type="PROSITE" id="PS00787">
    <property type="entry name" value="CHORISMATE_SYNTHASE_1"/>
    <property type="match status" value="1"/>
</dbReference>
<dbReference type="PROSITE" id="PS00788">
    <property type="entry name" value="CHORISMATE_SYNTHASE_2"/>
    <property type="match status" value="1"/>
</dbReference>
<protein>
    <recommendedName>
        <fullName evidence="1">Chorismate synthase</fullName>
        <shortName evidence="1">CS</shortName>
        <ecNumber evidence="1">4.2.3.5</ecNumber>
    </recommendedName>
    <alternativeName>
        <fullName evidence="1">5-enolpyruvylshikimate-3-phosphate phospholyase</fullName>
    </alternativeName>
</protein>
<evidence type="ECO:0000255" key="1">
    <source>
        <dbReference type="HAMAP-Rule" id="MF_00300"/>
    </source>
</evidence>
<proteinExistence type="inferred from homology"/>
<keyword id="KW-0028">Amino-acid biosynthesis</keyword>
<keyword id="KW-0057">Aromatic amino acid biosynthesis</keyword>
<keyword id="KW-0274">FAD</keyword>
<keyword id="KW-0285">Flavoprotein</keyword>
<keyword id="KW-0288">FMN</keyword>
<keyword id="KW-0456">Lyase</keyword>
<keyword id="KW-0521">NADP</keyword>
<keyword id="KW-1185">Reference proteome</keyword>
<accession>Q1LTA9</accession>
<feature type="chain" id="PRO_0000256272" description="Chorismate synthase">
    <location>
        <begin position="1"/>
        <end position="355"/>
    </location>
</feature>
<feature type="binding site" evidence="1">
    <location>
        <position position="48"/>
    </location>
    <ligand>
        <name>NADP(+)</name>
        <dbReference type="ChEBI" id="CHEBI:58349"/>
    </ligand>
</feature>
<feature type="binding site" evidence="1">
    <location>
        <begin position="125"/>
        <end position="127"/>
    </location>
    <ligand>
        <name>FMN</name>
        <dbReference type="ChEBI" id="CHEBI:58210"/>
    </ligand>
</feature>
<feature type="binding site" evidence="1">
    <location>
        <begin position="238"/>
        <end position="239"/>
    </location>
    <ligand>
        <name>FMN</name>
        <dbReference type="ChEBI" id="CHEBI:58210"/>
    </ligand>
</feature>
<feature type="binding site" evidence="1">
    <location>
        <position position="278"/>
    </location>
    <ligand>
        <name>FMN</name>
        <dbReference type="ChEBI" id="CHEBI:58210"/>
    </ligand>
</feature>
<feature type="binding site" evidence="1">
    <location>
        <begin position="293"/>
        <end position="297"/>
    </location>
    <ligand>
        <name>FMN</name>
        <dbReference type="ChEBI" id="CHEBI:58210"/>
    </ligand>
</feature>
<feature type="binding site" evidence="1">
    <location>
        <position position="319"/>
    </location>
    <ligand>
        <name>FMN</name>
        <dbReference type="ChEBI" id="CHEBI:58210"/>
    </ligand>
</feature>
<organism>
    <name type="scientific">Baumannia cicadellinicola subsp. Homalodisca coagulata</name>
    <dbReference type="NCBI Taxonomy" id="374463"/>
    <lineage>
        <taxon>Bacteria</taxon>
        <taxon>Pseudomonadati</taxon>
        <taxon>Pseudomonadota</taxon>
        <taxon>Gammaproteobacteria</taxon>
        <taxon>Candidatus Palibaumannia</taxon>
    </lineage>
</organism>
<sequence>MGGNSIGNLFRVTTFGESHGKALGGIIDGVPPGMKLSEDDLQIDLNRRCPGKSLYITPRYEHDKVYILSGIFEGVTTGTSIGLLVQNKDQHSEDYQSIRDLYRPGHADYSYEKKYGMRDYRGGGRSSARETVIRVAAGAIAKKYLAYRCGIKIRGFIAQIGHIKCELKDWNQVEQNPFFCPDIDCLEALDILIRNLKKYGNSIGAKVTIIAENVPAGLGEPVFDRLDADLAHALMSINAVKGVEIGDGFAVISQLGNENRDEITSQGFLSNHAGGILGGISSGQPVIAHIALKPASSVKQPCNTVTRYGNEVEIITEGRHDICVGIRAVPIAEAMMAIVLMDHFLRNRAQCSDVK</sequence>